<protein>
    <recommendedName>
        <fullName evidence="1">Protein-export protein SecB</fullName>
    </recommendedName>
</protein>
<dbReference type="EMBL" id="CP000050">
    <property type="protein sequence ID" value="AAY47300.1"/>
    <property type="molecule type" value="Genomic_DNA"/>
</dbReference>
<dbReference type="RefSeq" id="WP_011035459.1">
    <property type="nucleotide sequence ID" value="NZ_CP155948.1"/>
</dbReference>
<dbReference type="SMR" id="Q4V073"/>
<dbReference type="GeneID" id="58011529"/>
<dbReference type="KEGG" id="xcb:XC_0213"/>
<dbReference type="HOGENOM" id="CLU_111574_1_0_6"/>
<dbReference type="Proteomes" id="UP000000420">
    <property type="component" value="Chromosome"/>
</dbReference>
<dbReference type="GO" id="GO:0005737">
    <property type="term" value="C:cytoplasm"/>
    <property type="evidence" value="ECO:0007669"/>
    <property type="project" value="UniProtKB-SubCell"/>
</dbReference>
<dbReference type="GO" id="GO:0051082">
    <property type="term" value="F:unfolded protein binding"/>
    <property type="evidence" value="ECO:0007669"/>
    <property type="project" value="InterPro"/>
</dbReference>
<dbReference type="GO" id="GO:0006457">
    <property type="term" value="P:protein folding"/>
    <property type="evidence" value="ECO:0007669"/>
    <property type="project" value="UniProtKB-UniRule"/>
</dbReference>
<dbReference type="GO" id="GO:0051262">
    <property type="term" value="P:protein tetramerization"/>
    <property type="evidence" value="ECO:0007669"/>
    <property type="project" value="InterPro"/>
</dbReference>
<dbReference type="GO" id="GO:0015031">
    <property type="term" value="P:protein transport"/>
    <property type="evidence" value="ECO:0007669"/>
    <property type="project" value="UniProtKB-UniRule"/>
</dbReference>
<dbReference type="Gene3D" id="3.10.420.10">
    <property type="entry name" value="SecB-like"/>
    <property type="match status" value="1"/>
</dbReference>
<dbReference type="HAMAP" id="MF_00821">
    <property type="entry name" value="SecB"/>
    <property type="match status" value="1"/>
</dbReference>
<dbReference type="InterPro" id="IPR003708">
    <property type="entry name" value="SecB"/>
</dbReference>
<dbReference type="InterPro" id="IPR035958">
    <property type="entry name" value="SecB-like_sf"/>
</dbReference>
<dbReference type="NCBIfam" id="NF004391">
    <property type="entry name" value="PRK05751.1-2"/>
    <property type="match status" value="1"/>
</dbReference>
<dbReference type="NCBIfam" id="NF004393">
    <property type="entry name" value="PRK05751.1-4"/>
    <property type="match status" value="1"/>
</dbReference>
<dbReference type="NCBIfam" id="TIGR00809">
    <property type="entry name" value="secB"/>
    <property type="match status" value="1"/>
</dbReference>
<dbReference type="PANTHER" id="PTHR36918">
    <property type="match status" value="1"/>
</dbReference>
<dbReference type="PANTHER" id="PTHR36918:SF1">
    <property type="entry name" value="PROTEIN-EXPORT PROTEIN SECB"/>
    <property type="match status" value="1"/>
</dbReference>
<dbReference type="Pfam" id="PF02556">
    <property type="entry name" value="SecB"/>
    <property type="match status" value="1"/>
</dbReference>
<dbReference type="PRINTS" id="PR01594">
    <property type="entry name" value="SECBCHAPRONE"/>
</dbReference>
<dbReference type="SUPFAM" id="SSF54611">
    <property type="entry name" value="SecB-like"/>
    <property type="match status" value="1"/>
</dbReference>
<proteinExistence type="inferred from homology"/>
<accession>Q4V073</accession>
<gene>
    <name evidence="1" type="primary">secB</name>
    <name type="ordered locus">XC_0213</name>
</gene>
<keyword id="KW-0143">Chaperone</keyword>
<keyword id="KW-0963">Cytoplasm</keyword>
<keyword id="KW-0653">Protein transport</keyword>
<keyword id="KW-0811">Translocation</keyword>
<keyword id="KW-0813">Transport</keyword>
<organism>
    <name type="scientific">Xanthomonas campestris pv. campestris (strain 8004)</name>
    <dbReference type="NCBI Taxonomy" id="314565"/>
    <lineage>
        <taxon>Bacteria</taxon>
        <taxon>Pseudomonadati</taxon>
        <taxon>Pseudomonadota</taxon>
        <taxon>Gammaproteobacteria</taxon>
        <taxon>Lysobacterales</taxon>
        <taxon>Lysobacteraceae</taxon>
        <taxon>Xanthomonas</taxon>
    </lineage>
</organism>
<evidence type="ECO:0000255" key="1">
    <source>
        <dbReference type="HAMAP-Rule" id="MF_00821"/>
    </source>
</evidence>
<name>SECB_XANC8</name>
<sequence>MSDEILNGAAAPADAAAGPAFTIEKIYVKDVSFESPNAPAVFNDANQPELQLNLNQKVQRLNDNAFEVVLAVTLTCTAGGKTAYVAEVQQAGVFGLVGLEPQAIDVLLGTQCPNILFPYVRTLVSDLIQAGGFPPFYLQPINFEALYAETLRQRSQGETSLADSEPAGNA</sequence>
<reference key="1">
    <citation type="journal article" date="2005" name="Genome Res.">
        <title>Comparative and functional genomic analyses of the pathogenicity of phytopathogen Xanthomonas campestris pv. campestris.</title>
        <authorList>
            <person name="Qian W."/>
            <person name="Jia Y."/>
            <person name="Ren S.-X."/>
            <person name="He Y.-Q."/>
            <person name="Feng J.-X."/>
            <person name="Lu L.-F."/>
            <person name="Sun Q."/>
            <person name="Ying G."/>
            <person name="Tang D.-J."/>
            <person name="Tang H."/>
            <person name="Wu W."/>
            <person name="Hao P."/>
            <person name="Wang L."/>
            <person name="Jiang B.-L."/>
            <person name="Zeng S."/>
            <person name="Gu W.-Y."/>
            <person name="Lu G."/>
            <person name="Rong L."/>
            <person name="Tian Y."/>
            <person name="Yao Z."/>
            <person name="Fu G."/>
            <person name="Chen B."/>
            <person name="Fang R."/>
            <person name="Qiang B."/>
            <person name="Chen Z."/>
            <person name="Zhao G.-P."/>
            <person name="Tang J.-L."/>
            <person name="He C."/>
        </authorList>
    </citation>
    <scope>NUCLEOTIDE SEQUENCE [LARGE SCALE GENOMIC DNA]</scope>
    <source>
        <strain>8004</strain>
    </source>
</reference>
<feature type="chain" id="PRO_0000055429" description="Protein-export protein SecB">
    <location>
        <begin position="1"/>
        <end position="170"/>
    </location>
</feature>
<comment type="function">
    <text evidence="1">One of the proteins required for the normal export of preproteins out of the cell cytoplasm. It is a molecular chaperone that binds to a subset of precursor proteins, maintaining them in a translocation-competent state. It also specifically binds to its receptor SecA.</text>
</comment>
<comment type="subunit">
    <text evidence="1">Homotetramer, a dimer of dimers. One homotetramer interacts with 1 SecA dimer.</text>
</comment>
<comment type="subcellular location">
    <subcellularLocation>
        <location evidence="1">Cytoplasm</location>
    </subcellularLocation>
</comment>
<comment type="similarity">
    <text evidence="1">Belongs to the SecB family.</text>
</comment>